<evidence type="ECO:0000255" key="1">
    <source>
        <dbReference type="HAMAP-Rule" id="MF_00034"/>
    </source>
</evidence>
<dbReference type="EC" id="3.1.21.10" evidence="1"/>
<dbReference type="EMBL" id="CP000774">
    <property type="protein sequence ID" value="ABS63729.1"/>
    <property type="molecule type" value="Genomic_DNA"/>
</dbReference>
<dbReference type="RefSeq" id="WP_012111033.1">
    <property type="nucleotide sequence ID" value="NC_009719.1"/>
</dbReference>
<dbReference type="SMR" id="A7HUZ6"/>
<dbReference type="STRING" id="402881.Plav_2115"/>
<dbReference type="KEGG" id="pla:Plav_2115"/>
<dbReference type="eggNOG" id="COG0817">
    <property type="taxonomic scope" value="Bacteria"/>
</dbReference>
<dbReference type="HOGENOM" id="CLU_091257_1_0_5"/>
<dbReference type="OrthoDB" id="9805499at2"/>
<dbReference type="Proteomes" id="UP000006377">
    <property type="component" value="Chromosome"/>
</dbReference>
<dbReference type="GO" id="GO:0005737">
    <property type="term" value="C:cytoplasm"/>
    <property type="evidence" value="ECO:0007669"/>
    <property type="project" value="UniProtKB-SubCell"/>
</dbReference>
<dbReference type="GO" id="GO:0048476">
    <property type="term" value="C:Holliday junction resolvase complex"/>
    <property type="evidence" value="ECO:0007669"/>
    <property type="project" value="UniProtKB-UniRule"/>
</dbReference>
<dbReference type="GO" id="GO:0008821">
    <property type="term" value="F:crossover junction DNA endonuclease activity"/>
    <property type="evidence" value="ECO:0007669"/>
    <property type="project" value="UniProtKB-UniRule"/>
</dbReference>
<dbReference type="GO" id="GO:0003677">
    <property type="term" value="F:DNA binding"/>
    <property type="evidence" value="ECO:0007669"/>
    <property type="project" value="UniProtKB-KW"/>
</dbReference>
<dbReference type="GO" id="GO:0000287">
    <property type="term" value="F:magnesium ion binding"/>
    <property type="evidence" value="ECO:0007669"/>
    <property type="project" value="UniProtKB-UniRule"/>
</dbReference>
<dbReference type="GO" id="GO:0006310">
    <property type="term" value="P:DNA recombination"/>
    <property type="evidence" value="ECO:0007669"/>
    <property type="project" value="UniProtKB-UniRule"/>
</dbReference>
<dbReference type="GO" id="GO:0006281">
    <property type="term" value="P:DNA repair"/>
    <property type="evidence" value="ECO:0007669"/>
    <property type="project" value="UniProtKB-UniRule"/>
</dbReference>
<dbReference type="CDD" id="cd16962">
    <property type="entry name" value="RuvC"/>
    <property type="match status" value="1"/>
</dbReference>
<dbReference type="FunFam" id="3.30.420.10:FF:000002">
    <property type="entry name" value="Crossover junction endodeoxyribonuclease RuvC"/>
    <property type="match status" value="1"/>
</dbReference>
<dbReference type="Gene3D" id="3.30.420.10">
    <property type="entry name" value="Ribonuclease H-like superfamily/Ribonuclease H"/>
    <property type="match status" value="1"/>
</dbReference>
<dbReference type="HAMAP" id="MF_00034">
    <property type="entry name" value="RuvC"/>
    <property type="match status" value="1"/>
</dbReference>
<dbReference type="InterPro" id="IPR012337">
    <property type="entry name" value="RNaseH-like_sf"/>
</dbReference>
<dbReference type="InterPro" id="IPR036397">
    <property type="entry name" value="RNaseH_sf"/>
</dbReference>
<dbReference type="InterPro" id="IPR002176">
    <property type="entry name" value="X-over_junc_endoDNase_RuvC"/>
</dbReference>
<dbReference type="NCBIfam" id="TIGR00228">
    <property type="entry name" value="ruvC"/>
    <property type="match status" value="1"/>
</dbReference>
<dbReference type="PANTHER" id="PTHR30194">
    <property type="entry name" value="CROSSOVER JUNCTION ENDODEOXYRIBONUCLEASE RUVC"/>
    <property type="match status" value="1"/>
</dbReference>
<dbReference type="PANTHER" id="PTHR30194:SF3">
    <property type="entry name" value="CROSSOVER JUNCTION ENDODEOXYRIBONUCLEASE RUVC"/>
    <property type="match status" value="1"/>
</dbReference>
<dbReference type="Pfam" id="PF02075">
    <property type="entry name" value="RuvC"/>
    <property type="match status" value="1"/>
</dbReference>
<dbReference type="PRINTS" id="PR00696">
    <property type="entry name" value="RSOLVASERUVC"/>
</dbReference>
<dbReference type="SUPFAM" id="SSF53098">
    <property type="entry name" value="Ribonuclease H-like"/>
    <property type="match status" value="1"/>
</dbReference>
<gene>
    <name evidence="1" type="primary">ruvC</name>
    <name type="ordered locus">Plav_2115</name>
</gene>
<organism>
    <name type="scientific">Parvibaculum lavamentivorans (strain DS-1 / DSM 13023 / NCIMB 13966)</name>
    <dbReference type="NCBI Taxonomy" id="402881"/>
    <lineage>
        <taxon>Bacteria</taxon>
        <taxon>Pseudomonadati</taxon>
        <taxon>Pseudomonadota</taxon>
        <taxon>Alphaproteobacteria</taxon>
        <taxon>Hyphomicrobiales</taxon>
        <taxon>Parvibaculaceae</taxon>
        <taxon>Parvibaculum</taxon>
    </lineage>
</organism>
<comment type="function">
    <text evidence="1">The RuvA-RuvB-RuvC complex processes Holliday junction (HJ) DNA during genetic recombination and DNA repair. Endonuclease that resolves HJ intermediates. Cleaves cruciform DNA by making single-stranded nicks across the HJ at symmetrical positions within the homologous arms, yielding a 5'-phosphate and a 3'-hydroxyl group; requires a central core of homology in the junction. The consensus cleavage sequence is 5'-(A/T)TT(C/G)-3'. Cleavage occurs on the 3'-side of the TT dinucleotide at the point of strand exchange. HJ branch migration catalyzed by RuvA-RuvB allows RuvC to scan DNA until it finds its consensus sequence, where it cleaves and resolves the cruciform DNA.</text>
</comment>
<comment type="catalytic activity">
    <reaction evidence="1">
        <text>Endonucleolytic cleavage at a junction such as a reciprocal single-stranded crossover between two homologous DNA duplexes (Holliday junction).</text>
        <dbReference type="EC" id="3.1.21.10"/>
    </reaction>
</comment>
<comment type="cofactor">
    <cofactor evidence="1">
        <name>Mg(2+)</name>
        <dbReference type="ChEBI" id="CHEBI:18420"/>
    </cofactor>
    <text evidence="1">Binds 2 Mg(2+) ion per subunit.</text>
</comment>
<comment type="subunit">
    <text evidence="1">Homodimer which binds Holliday junction (HJ) DNA. The HJ becomes 2-fold symmetrical on binding to RuvC with unstacked arms; it has a different conformation from HJ DNA in complex with RuvA. In the full resolvosome a probable DNA-RuvA(4)-RuvB(12)-RuvC(2) complex forms which resolves the HJ.</text>
</comment>
<comment type="subcellular location">
    <subcellularLocation>
        <location evidence="1">Cytoplasm</location>
    </subcellularLocation>
</comment>
<comment type="similarity">
    <text evidence="1">Belongs to the RuvC family.</text>
</comment>
<name>RUVC_PARL1</name>
<keyword id="KW-0963">Cytoplasm</keyword>
<keyword id="KW-0227">DNA damage</keyword>
<keyword id="KW-0233">DNA recombination</keyword>
<keyword id="KW-0234">DNA repair</keyword>
<keyword id="KW-0238">DNA-binding</keyword>
<keyword id="KW-0255">Endonuclease</keyword>
<keyword id="KW-0378">Hydrolase</keyword>
<keyword id="KW-0460">Magnesium</keyword>
<keyword id="KW-0479">Metal-binding</keyword>
<keyword id="KW-0540">Nuclease</keyword>
<keyword id="KW-1185">Reference proteome</keyword>
<accession>A7HUZ6</accession>
<protein>
    <recommendedName>
        <fullName evidence="1">Crossover junction endodeoxyribonuclease RuvC</fullName>
        <ecNumber evidence="1">3.1.21.10</ecNumber>
    </recommendedName>
    <alternativeName>
        <fullName evidence="1">Holliday junction nuclease RuvC</fullName>
    </alternativeName>
    <alternativeName>
        <fullName evidence="1">Holliday junction resolvase RuvC</fullName>
    </alternativeName>
</protein>
<sequence>MPVSLTYLGIDPGLTATGWGVIGISGSRLTHIANGTITSNARLSLAERLVQIEAGLVQVIHEHAPDAAAVEQAFVARDASAALKLGQARAIALLVSARAGLAVAEYAPNHVKKSVVGAGHADKSQIRLMVEMLLPGAKAGSEHAADALALAICHAHSGSANERIAAALLRAGAGR</sequence>
<proteinExistence type="inferred from homology"/>
<feature type="chain" id="PRO_0000332436" description="Crossover junction endodeoxyribonuclease RuvC">
    <location>
        <begin position="1"/>
        <end position="175"/>
    </location>
</feature>
<feature type="active site" evidence="1">
    <location>
        <position position="11"/>
    </location>
</feature>
<feature type="active site" evidence="1">
    <location>
        <position position="71"/>
    </location>
</feature>
<feature type="active site" evidence="1">
    <location>
        <position position="143"/>
    </location>
</feature>
<feature type="binding site" evidence="1">
    <location>
        <position position="11"/>
    </location>
    <ligand>
        <name>Mg(2+)</name>
        <dbReference type="ChEBI" id="CHEBI:18420"/>
        <label>1</label>
    </ligand>
</feature>
<feature type="binding site" evidence="1">
    <location>
        <position position="71"/>
    </location>
    <ligand>
        <name>Mg(2+)</name>
        <dbReference type="ChEBI" id="CHEBI:18420"/>
        <label>2</label>
    </ligand>
</feature>
<feature type="binding site" evidence="1">
    <location>
        <position position="143"/>
    </location>
    <ligand>
        <name>Mg(2+)</name>
        <dbReference type="ChEBI" id="CHEBI:18420"/>
        <label>1</label>
    </ligand>
</feature>
<reference key="1">
    <citation type="journal article" date="2011" name="Stand. Genomic Sci.">
        <title>Complete genome sequence of Parvibaculum lavamentivorans type strain (DS-1(T)).</title>
        <authorList>
            <person name="Schleheck D."/>
            <person name="Weiss M."/>
            <person name="Pitluck S."/>
            <person name="Bruce D."/>
            <person name="Land M.L."/>
            <person name="Han S."/>
            <person name="Saunders E."/>
            <person name="Tapia R."/>
            <person name="Detter C."/>
            <person name="Brettin T."/>
            <person name="Han J."/>
            <person name="Woyke T."/>
            <person name="Goodwin L."/>
            <person name="Pennacchio L."/>
            <person name="Nolan M."/>
            <person name="Cook A.M."/>
            <person name="Kjelleberg S."/>
            <person name="Thomas T."/>
        </authorList>
    </citation>
    <scope>NUCLEOTIDE SEQUENCE [LARGE SCALE GENOMIC DNA]</scope>
    <source>
        <strain>DS-1 / DSM 13023 / NCIMB 13966</strain>
    </source>
</reference>